<name>TGT_RICAH</name>
<keyword id="KW-0328">Glycosyltransferase</keyword>
<keyword id="KW-0479">Metal-binding</keyword>
<keyword id="KW-0671">Queuosine biosynthesis</keyword>
<keyword id="KW-0808">Transferase</keyword>
<keyword id="KW-0819">tRNA processing</keyword>
<keyword id="KW-0862">Zinc</keyword>
<evidence type="ECO:0000255" key="1">
    <source>
        <dbReference type="HAMAP-Rule" id="MF_00168"/>
    </source>
</evidence>
<protein>
    <recommendedName>
        <fullName evidence="1">Queuine tRNA-ribosyltransferase</fullName>
        <ecNumber evidence="1">2.4.2.29</ecNumber>
    </recommendedName>
    <alternativeName>
        <fullName evidence="1">Guanine insertion enzyme</fullName>
    </alternativeName>
    <alternativeName>
        <fullName evidence="1">tRNA-guanine transglycosylase</fullName>
    </alternativeName>
</protein>
<reference key="1">
    <citation type="submission" date="2007-09" db="EMBL/GenBank/DDBJ databases">
        <title>Complete genome sequence of Rickettsia akari.</title>
        <authorList>
            <person name="Madan A."/>
            <person name="Fahey J."/>
            <person name="Helton E."/>
            <person name="Ketteman M."/>
            <person name="Madan A."/>
            <person name="Rodrigues S."/>
            <person name="Sanchez A."/>
            <person name="Whiting M."/>
            <person name="Dasch G."/>
            <person name="Eremeeva M."/>
        </authorList>
    </citation>
    <scope>NUCLEOTIDE SEQUENCE [LARGE SCALE GENOMIC DNA]</scope>
    <source>
        <strain>Hartford</strain>
    </source>
</reference>
<dbReference type="EC" id="2.4.2.29" evidence="1"/>
<dbReference type="EMBL" id="CP000847">
    <property type="protein sequence ID" value="ABV75357.1"/>
    <property type="molecule type" value="Genomic_DNA"/>
</dbReference>
<dbReference type="RefSeq" id="WP_012149987.1">
    <property type="nucleotide sequence ID" value="NC_009881.1"/>
</dbReference>
<dbReference type="SMR" id="A8GPN2"/>
<dbReference type="STRING" id="293614.A1C_05610"/>
<dbReference type="KEGG" id="rak:A1C_05610"/>
<dbReference type="eggNOG" id="COG0343">
    <property type="taxonomic scope" value="Bacteria"/>
</dbReference>
<dbReference type="HOGENOM" id="CLU_022060_0_1_5"/>
<dbReference type="UniPathway" id="UPA00392"/>
<dbReference type="Proteomes" id="UP000006830">
    <property type="component" value="Chromosome"/>
</dbReference>
<dbReference type="GO" id="GO:0005737">
    <property type="term" value="C:cytoplasm"/>
    <property type="evidence" value="ECO:0007669"/>
    <property type="project" value="TreeGrafter"/>
</dbReference>
<dbReference type="GO" id="GO:0046872">
    <property type="term" value="F:metal ion binding"/>
    <property type="evidence" value="ECO:0007669"/>
    <property type="project" value="UniProtKB-KW"/>
</dbReference>
<dbReference type="GO" id="GO:0008479">
    <property type="term" value="F:tRNA-guanosine(34) queuine transglycosylase activity"/>
    <property type="evidence" value="ECO:0007669"/>
    <property type="project" value="UniProtKB-UniRule"/>
</dbReference>
<dbReference type="GO" id="GO:0008616">
    <property type="term" value="P:queuosine biosynthetic process"/>
    <property type="evidence" value="ECO:0007669"/>
    <property type="project" value="UniProtKB-UniRule"/>
</dbReference>
<dbReference type="GO" id="GO:0002099">
    <property type="term" value="P:tRNA wobble guanine modification"/>
    <property type="evidence" value="ECO:0007669"/>
    <property type="project" value="TreeGrafter"/>
</dbReference>
<dbReference type="GO" id="GO:0101030">
    <property type="term" value="P:tRNA-guanine transglycosylation"/>
    <property type="evidence" value="ECO:0007669"/>
    <property type="project" value="InterPro"/>
</dbReference>
<dbReference type="FunFam" id="3.20.20.105:FF:000001">
    <property type="entry name" value="Queuine tRNA-ribosyltransferase"/>
    <property type="match status" value="1"/>
</dbReference>
<dbReference type="Gene3D" id="3.20.20.105">
    <property type="entry name" value="Queuine tRNA-ribosyltransferase-like"/>
    <property type="match status" value="1"/>
</dbReference>
<dbReference type="HAMAP" id="MF_00168">
    <property type="entry name" value="Q_tRNA_Tgt"/>
    <property type="match status" value="1"/>
</dbReference>
<dbReference type="InterPro" id="IPR050076">
    <property type="entry name" value="ArchSynthase1/Queuine_TRR"/>
</dbReference>
<dbReference type="InterPro" id="IPR004803">
    <property type="entry name" value="TGT"/>
</dbReference>
<dbReference type="InterPro" id="IPR036511">
    <property type="entry name" value="TGT-like_sf"/>
</dbReference>
<dbReference type="InterPro" id="IPR002616">
    <property type="entry name" value="tRNA_ribo_trans-like"/>
</dbReference>
<dbReference type="NCBIfam" id="TIGR00430">
    <property type="entry name" value="Q_tRNA_tgt"/>
    <property type="match status" value="1"/>
</dbReference>
<dbReference type="NCBIfam" id="TIGR00449">
    <property type="entry name" value="tgt_general"/>
    <property type="match status" value="1"/>
</dbReference>
<dbReference type="PANTHER" id="PTHR46499">
    <property type="entry name" value="QUEUINE TRNA-RIBOSYLTRANSFERASE"/>
    <property type="match status" value="1"/>
</dbReference>
<dbReference type="PANTHER" id="PTHR46499:SF1">
    <property type="entry name" value="QUEUINE TRNA-RIBOSYLTRANSFERASE"/>
    <property type="match status" value="1"/>
</dbReference>
<dbReference type="Pfam" id="PF01702">
    <property type="entry name" value="TGT"/>
    <property type="match status" value="1"/>
</dbReference>
<dbReference type="SUPFAM" id="SSF51713">
    <property type="entry name" value="tRNA-guanine transglycosylase"/>
    <property type="match status" value="1"/>
</dbReference>
<feature type="chain" id="PRO_1000016836" description="Queuine tRNA-ribosyltransferase">
    <location>
        <begin position="1"/>
        <end position="361"/>
    </location>
</feature>
<feature type="region of interest" description="RNA binding" evidence="1">
    <location>
        <begin position="247"/>
        <end position="253"/>
    </location>
</feature>
<feature type="region of interest" description="RNA binding; important for wobble base 34 recognition" evidence="1">
    <location>
        <begin position="271"/>
        <end position="275"/>
    </location>
</feature>
<feature type="active site" description="Proton acceptor" evidence="1">
    <location>
        <position position="92"/>
    </location>
</feature>
<feature type="active site" description="Nucleophile" evidence="1">
    <location>
        <position position="266"/>
    </location>
</feature>
<feature type="binding site" evidence="1">
    <location>
        <begin position="92"/>
        <end position="96"/>
    </location>
    <ligand>
        <name>substrate</name>
    </ligand>
</feature>
<feature type="binding site" evidence="1">
    <location>
        <position position="146"/>
    </location>
    <ligand>
        <name>substrate</name>
    </ligand>
</feature>
<feature type="binding site" evidence="1">
    <location>
        <position position="189"/>
    </location>
    <ligand>
        <name>substrate</name>
    </ligand>
</feature>
<feature type="binding site" evidence="1">
    <location>
        <position position="216"/>
    </location>
    <ligand>
        <name>substrate</name>
    </ligand>
</feature>
<feature type="binding site" evidence="1">
    <location>
        <position position="304"/>
    </location>
    <ligand>
        <name>Zn(2+)</name>
        <dbReference type="ChEBI" id="CHEBI:29105"/>
    </ligand>
</feature>
<feature type="binding site" evidence="1">
    <location>
        <position position="306"/>
    </location>
    <ligand>
        <name>Zn(2+)</name>
        <dbReference type="ChEBI" id="CHEBI:29105"/>
    </ligand>
</feature>
<feature type="binding site" evidence="1">
    <location>
        <position position="309"/>
    </location>
    <ligand>
        <name>Zn(2+)</name>
        <dbReference type="ChEBI" id="CHEBI:29105"/>
    </ligand>
</feature>
<feature type="binding site" evidence="1">
    <location>
        <position position="335"/>
    </location>
    <ligand>
        <name>Zn(2+)</name>
        <dbReference type="ChEBI" id="CHEBI:29105"/>
    </ligand>
</feature>
<sequence length="361" mass="40425">MSKFSFNIHHQHKKARSGIIATAHGEIRTPAFMPVGTRGTVKAMLPESVAETGADILLGNTYHLMLQPSAERIARLGGLHKFMNWDKPILTDSGGFQVMSLSKLRKITEEGVSFSSHINGDKYMLTPERSTAIQYLLGSTITMAFDECTPYPVTFEEAKTSMQLTTRWAHRSRNAFVKREGYAQFGIIQGSVYEELREQSAKGLVELDFDGYAIGGLAVGEGQELMFKVLDYAPDFLPQNKPRYLMGVGKPADIIGAVNRGIDMFDCVIPTRSGRNGQAFTKYGTVNICNSKYSGDNEPLEHDCPCPACTNYTKAYLHHLVRIGEILGSMLMTWHNLTYFQNLISRIREYIKLGKDFDFYS</sequence>
<proteinExistence type="inferred from homology"/>
<comment type="function">
    <text evidence="1">Catalyzes the base-exchange of a guanine (G) residue with the queuine precursor 7-aminomethyl-7-deazaguanine (PreQ1) at position 34 (anticodon wobble position) in tRNAs with GU(N) anticodons (tRNA-Asp, -Asn, -His and -Tyr). Catalysis occurs through a double-displacement mechanism. The nucleophile active site attacks the C1' of nucleotide 34 to detach the guanine base from the RNA, forming a covalent enzyme-RNA intermediate. The proton acceptor active site deprotonates the incoming PreQ1, allowing a nucleophilic attack on the C1' of the ribose to form the product. After dissociation, two additional enzymatic reactions on the tRNA convert PreQ1 to queuine (Q), resulting in the hypermodified nucleoside queuosine (7-(((4,5-cis-dihydroxy-2-cyclopenten-1-yl)amino)methyl)-7-deazaguanosine).</text>
</comment>
<comment type="catalytic activity">
    <reaction evidence="1">
        <text>7-aminomethyl-7-carbaguanine + guanosine(34) in tRNA = 7-aminomethyl-7-carbaguanosine(34) in tRNA + guanine</text>
        <dbReference type="Rhea" id="RHEA:24104"/>
        <dbReference type="Rhea" id="RHEA-COMP:10341"/>
        <dbReference type="Rhea" id="RHEA-COMP:10342"/>
        <dbReference type="ChEBI" id="CHEBI:16235"/>
        <dbReference type="ChEBI" id="CHEBI:58703"/>
        <dbReference type="ChEBI" id="CHEBI:74269"/>
        <dbReference type="ChEBI" id="CHEBI:82833"/>
        <dbReference type="EC" id="2.4.2.29"/>
    </reaction>
</comment>
<comment type="cofactor">
    <cofactor evidence="1">
        <name>Zn(2+)</name>
        <dbReference type="ChEBI" id="CHEBI:29105"/>
    </cofactor>
    <text evidence="1">Binds 1 zinc ion per subunit.</text>
</comment>
<comment type="pathway">
    <text evidence="1">tRNA modification; tRNA-queuosine biosynthesis.</text>
</comment>
<comment type="subunit">
    <text evidence="1">Homodimer. Within each dimer, one monomer is responsible for RNA recognition and catalysis, while the other monomer binds to the replacement base PreQ1.</text>
</comment>
<comment type="similarity">
    <text evidence="1">Belongs to the queuine tRNA-ribosyltransferase family.</text>
</comment>
<organism>
    <name type="scientific">Rickettsia akari (strain Hartford)</name>
    <dbReference type="NCBI Taxonomy" id="293614"/>
    <lineage>
        <taxon>Bacteria</taxon>
        <taxon>Pseudomonadati</taxon>
        <taxon>Pseudomonadota</taxon>
        <taxon>Alphaproteobacteria</taxon>
        <taxon>Rickettsiales</taxon>
        <taxon>Rickettsiaceae</taxon>
        <taxon>Rickettsieae</taxon>
        <taxon>Rickettsia</taxon>
        <taxon>spotted fever group</taxon>
    </lineage>
</organism>
<accession>A8GPN2</accession>
<gene>
    <name evidence="1" type="primary">tgt</name>
    <name type="ordered locus">A1C_05610</name>
</gene>